<protein>
    <recommendedName>
        <fullName evidence="1">4-diphosphocytidyl-2-C-methyl-D-erythritol kinase</fullName>
        <shortName evidence="1">CMK</shortName>
        <ecNumber evidence="1">2.7.1.148</ecNumber>
    </recommendedName>
    <alternativeName>
        <fullName evidence="1">4-(cytidine-5'-diphospho)-2-C-methyl-D-erythritol kinase</fullName>
    </alternativeName>
</protein>
<name>ISPE_SALEP</name>
<organism>
    <name type="scientific">Salmonella enteritidis PT4 (strain P125109)</name>
    <dbReference type="NCBI Taxonomy" id="550537"/>
    <lineage>
        <taxon>Bacteria</taxon>
        <taxon>Pseudomonadati</taxon>
        <taxon>Pseudomonadota</taxon>
        <taxon>Gammaproteobacteria</taxon>
        <taxon>Enterobacterales</taxon>
        <taxon>Enterobacteriaceae</taxon>
        <taxon>Salmonella</taxon>
    </lineage>
</organism>
<comment type="function">
    <text evidence="1">Catalyzes the phosphorylation of the position 2 hydroxy group of 4-diphosphocytidyl-2C-methyl-D-erythritol.</text>
</comment>
<comment type="catalytic activity">
    <reaction evidence="1">
        <text>4-CDP-2-C-methyl-D-erythritol + ATP = 4-CDP-2-C-methyl-D-erythritol 2-phosphate + ADP + H(+)</text>
        <dbReference type="Rhea" id="RHEA:18437"/>
        <dbReference type="ChEBI" id="CHEBI:15378"/>
        <dbReference type="ChEBI" id="CHEBI:30616"/>
        <dbReference type="ChEBI" id="CHEBI:57823"/>
        <dbReference type="ChEBI" id="CHEBI:57919"/>
        <dbReference type="ChEBI" id="CHEBI:456216"/>
        <dbReference type="EC" id="2.7.1.148"/>
    </reaction>
</comment>
<comment type="pathway">
    <text evidence="1">Isoprenoid biosynthesis; isopentenyl diphosphate biosynthesis via DXP pathway; isopentenyl diphosphate from 1-deoxy-D-xylulose 5-phosphate: step 3/6.</text>
</comment>
<comment type="subunit">
    <text evidence="1">Homodimer.</text>
</comment>
<comment type="similarity">
    <text evidence="1">Belongs to the GHMP kinase family. IspE subfamily.</text>
</comment>
<reference key="1">
    <citation type="journal article" date="2008" name="Genome Res.">
        <title>Comparative genome analysis of Salmonella enteritidis PT4 and Salmonella gallinarum 287/91 provides insights into evolutionary and host adaptation pathways.</title>
        <authorList>
            <person name="Thomson N.R."/>
            <person name="Clayton D.J."/>
            <person name="Windhorst D."/>
            <person name="Vernikos G."/>
            <person name="Davidson S."/>
            <person name="Churcher C."/>
            <person name="Quail M.A."/>
            <person name="Stevens M."/>
            <person name="Jones M.A."/>
            <person name="Watson M."/>
            <person name="Barron A."/>
            <person name="Layton A."/>
            <person name="Pickard D."/>
            <person name="Kingsley R.A."/>
            <person name="Bignell A."/>
            <person name="Clark L."/>
            <person name="Harris B."/>
            <person name="Ormond D."/>
            <person name="Abdellah Z."/>
            <person name="Brooks K."/>
            <person name="Cherevach I."/>
            <person name="Chillingworth T."/>
            <person name="Woodward J."/>
            <person name="Norberczak H."/>
            <person name="Lord A."/>
            <person name="Arrowsmith C."/>
            <person name="Jagels K."/>
            <person name="Moule S."/>
            <person name="Mungall K."/>
            <person name="Saunders M."/>
            <person name="Whitehead S."/>
            <person name="Chabalgoity J.A."/>
            <person name="Maskell D."/>
            <person name="Humphreys T."/>
            <person name="Roberts M."/>
            <person name="Barrow P.A."/>
            <person name="Dougan G."/>
            <person name="Parkhill J."/>
        </authorList>
    </citation>
    <scope>NUCLEOTIDE SEQUENCE [LARGE SCALE GENOMIC DNA]</scope>
    <source>
        <strain>P125109</strain>
    </source>
</reference>
<sequence length="283" mass="30889">MMTHWPSPAKLNLFLYITGQRADGYHTLQTLFQFLDYGDTLHIEPRRDGEIHLLTPVTGVENEDNLIVRAARLLMKVASESGRLPAGSGADISIEKRLPMGGGLGGGSSNAATVLVALNHLWQCGLSIDELATLGLTLGADVPVFVRGHAAFAEGVGEILTPVNPPEKWYLVAHPGVSIPTPVIFKDPQLPRNTPKRSIDTLLKCEFSNDCEVIARKRFREVDAALSWLLEYAPSRLTGTGACVFAEFDTESCARQVLEQAPEWLNAFVAKGVNLSPLHRELL</sequence>
<accession>B5R3J6</accession>
<proteinExistence type="inferred from homology"/>
<evidence type="ECO:0000255" key="1">
    <source>
        <dbReference type="HAMAP-Rule" id="MF_00061"/>
    </source>
</evidence>
<dbReference type="EC" id="2.7.1.148" evidence="1"/>
<dbReference type="EMBL" id="AM933172">
    <property type="protein sequence ID" value="CAR32838.1"/>
    <property type="molecule type" value="Genomic_DNA"/>
</dbReference>
<dbReference type="RefSeq" id="WP_000988260.1">
    <property type="nucleotide sequence ID" value="NC_011294.1"/>
</dbReference>
<dbReference type="SMR" id="B5R3J6"/>
<dbReference type="KEGG" id="set:SEN1260"/>
<dbReference type="HOGENOM" id="CLU_053057_3_0_6"/>
<dbReference type="UniPathway" id="UPA00056">
    <property type="reaction ID" value="UER00094"/>
</dbReference>
<dbReference type="Proteomes" id="UP000000613">
    <property type="component" value="Chromosome"/>
</dbReference>
<dbReference type="GO" id="GO:0050515">
    <property type="term" value="F:4-(cytidine 5'-diphospho)-2-C-methyl-D-erythritol kinase activity"/>
    <property type="evidence" value="ECO:0007669"/>
    <property type="project" value="UniProtKB-UniRule"/>
</dbReference>
<dbReference type="GO" id="GO:0005524">
    <property type="term" value="F:ATP binding"/>
    <property type="evidence" value="ECO:0007669"/>
    <property type="project" value="UniProtKB-UniRule"/>
</dbReference>
<dbReference type="GO" id="GO:0019288">
    <property type="term" value="P:isopentenyl diphosphate biosynthetic process, methylerythritol 4-phosphate pathway"/>
    <property type="evidence" value="ECO:0007669"/>
    <property type="project" value="UniProtKB-UniRule"/>
</dbReference>
<dbReference type="GO" id="GO:0016114">
    <property type="term" value="P:terpenoid biosynthetic process"/>
    <property type="evidence" value="ECO:0007669"/>
    <property type="project" value="InterPro"/>
</dbReference>
<dbReference type="FunFam" id="3.30.230.10:FF:000022">
    <property type="entry name" value="4-diphosphocytidyl-2-C-methyl-D-erythritol kinase"/>
    <property type="match status" value="1"/>
</dbReference>
<dbReference type="FunFam" id="3.30.70.890:FF:000004">
    <property type="entry name" value="4-diphosphocytidyl-2-C-methyl-D-erythritol kinase"/>
    <property type="match status" value="1"/>
</dbReference>
<dbReference type="Gene3D" id="3.30.230.10">
    <property type="match status" value="1"/>
</dbReference>
<dbReference type="Gene3D" id="3.30.70.890">
    <property type="entry name" value="GHMP kinase, C-terminal domain"/>
    <property type="match status" value="1"/>
</dbReference>
<dbReference type="HAMAP" id="MF_00061">
    <property type="entry name" value="IspE"/>
    <property type="match status" value="1"/>
</dbReference>
<dbReference type="InterPro" id="IPR013750">
    <property type="entry name" value="GHMP_kinase_C_dom"/>
</dbReference>
<dbReference type="InterPro" id="IPR036554">
    <property type="entry name" value="GHMP_kinase_C_sf"/>
</dbReference>
<dbReference type="InterPro" id="IPR006204">
    <property type="entry name" value="GHMP_kinase_N_dom"/>
</dbReference>
<dbReference type="InterPro" id="IPR004424">
    <property type="entry name" value="IspE"/>
</dbReference>
<dbReference type="InterPro" id="IPR020568">
    <property type="entry name" value="Ribosomal_Su5_D2-typ_SF"/>
</dbReference>
<dbReference type="InterPro" id="IPR014721">
    <property type="entry name" value="Ribsml_uS5_D2-typ_fold_subgr"/>
</dbReference>
<dbReference type="NCBIfam" id="TIGR00154">
    <property type="entry name" value="ispE"/>
    <property type="match status" value="1"/>
</dbReference>
<dbReference type="PANTHER" id="PTHR43527">
    <property type="entry name" value="4-DIPHOSPHOCYTIDYL-2-C-METHYL-D-ERYTHRITOL KINASE, CHLOROPLASTIC"/>
    <property type="match status" value="1"/>
</dbReference>
<dbReference type="PANTHER" id="PTHR43527:SF2">
    <property type="entry name" value="4-DIPHOSPHOCYTIDYL-2-C-METHYL-D-ERYTHRITOL KINASE, CHLOROPLASTIC"/>
    <property type="match status" value="1"/>
</dbReference>
<dbReference type="Pfam" id="PF08544">
    <property type="entry name" value="GHMP_kinases_C"/>
    <property type="match status" value="1"/>
</dbReference>
<dbReference type="Pfam" id="PF00288">
    <property type="entry name" value="GHMP_kinases_N"/>
    <property type="match status" value="1"/>
</dbReference>
<dbReference type="PIRSF" id="PIRSF010376">
    <property type="entry name" value="IspE"/>
    <property type="match status" value="1"/>
</dbReference>
<dbReference type="SUPFAM" id="SSF55060">
    <property type="entry name" value="GHMP Kinase, C-terminal domain"/>
    <property type="match status" value="1"/>
</dbReference>
<dbReference type="SUPFAM" id="SSF54211">
    <property type="entry name" value="Ribosomal protein S5 domain 2-like"/>
    <property type="match status" value="1"/>
</dbReference>
<keyword id="KW-0067">ATP-binding</keyword>
<keyword id="KW-0414">Isoprene biosynthesis</keyword>
<keyword id="KW-0418">Kinase</keyword>
<keyword id="KW-0547">Nucleotide-binding</keyword>
<keyword id="KW-0808">Transferase</keyword>
<feature type="chain" id="PRO_1000092111" description="4-diphosphocytidyl-2-C-methyl-D-erythritol kinase">
    <location>
        <begin position="1"/>
        <end position="283"/>
    </location>
</feature>
<feature type="active site" evidence="1">
    <location>
        <position position="10"/>
    </location>
</feature>
<feature type="active site" evidence="1">
    <location>
        <position position="141"/>
    </location>
</feature>
<feature type="binding site" evidence="1">
    <location>
        <begin position="99"/>
        <end position="109"/>
    </location>
    <ligand>
        <name>ATP</name>
        <dbReference type="ChEBI" id="CHEBI:30616"/>
    </ligand>
</feature>
<gene>
    <name evidence="1" type="primary">ispE</name>
    <name type="ordered locus">SEN1260</name>
</gene>